<name>PB2_I83A1</name>
<sequence length="759" mass="86006">MERIKELRNLMSQSRTREILTKTTVDHMAIIKKYTSGRQEKNPSLRMKWMMAMKYPITADKRITEMIPERNEQGQTLWSKMNDAGSDRVMISPLAVTWWNRNGPVASTVHYPKIYKTYFEKVERLKHGTFGPVHFRNQVKIRRRVDINPGHADLSAKEAQDVIMEVVFPNEVGARILTSESQLTITKEKKEELQNCKISPLMVAYMLERELVRKTRFLPVAGGTSSVYIEVLHLTQGTCWEQMYTPGGEVRNDDVDQSLIIAARNIVRRAAVSADPLASLLEMCHSTQIGGTRMVDILRQNPTEEQAVDICKAAMGLRISSSFSFGGFTFKRTSGSSVKREEEVLTGNLQTLKLKVHEGFEEFTMVGKRATAILRKATRRLIQLIVSGRDEQSIVEAIVVAMVFSQEDCMIKAVRGDLNFVNRANQRLNPMHQLLRHFQKDAKVLFQNWGIEPIDNVMGMIGILPDMTPSTEMSMRGVRVSKMGVDEYSNAERVVVSIDRFLRVRDQRGNVLLSPEEVNETQGTEKLTITYSSSMMWEINGPESVLVNTYQWIIRNWETVKIQWSQNPTMLYNKMEFEPFQSLVPKAIRGQYSGFVRTLFQQMRDVLGTFDTTQIIKLLPFAAAPPKQSRMQFSSLTVNVRGSGMRILVRGNSPVFNYNKTTKRLTVLGKDAGTLTEDPDEGTAGVESAVLRGFLILGKEDRRYGPALSINELSNLAKGEKANVLIGQGDVVLVMKRKRDSSILTDSQTATKRIRMAIN</sequence>
<comment type="function">
    <text evidence="1">Plays an essential role in transcription initiation and cap-stealing mechanism, in which cellular capped pre-mRNAs are used to generate primers for viral transcription. Recognizes and binds the 7-methylguanosine-containing cap of the target pre-RNA which is subsequently cleaved after 10-13 nucleotides by the viral protein PA. Plays a role in the initiation of the viral genome replication and modulates the activity of the ribonucleoprotein (RNP) complex. In addition, participates in the inhibition of type I interferon induction through interaction with and inhibition of the host mitochondrial antiviral signaling protein MAVS.</text>
</comment>
<comment type="subunit">
    <text evidence="1">Influenza RNA polymerase is composed of three subunits: PB1, PB2 and PA. Interacts (via N-terminus) with PB1 (via C-terminus). Interacts with nucleoprotein NP (via N-terminus). Interacts (via N-terminus) with host MAVS (via N-terminus); this interaction inhibits host innate immune response.</text>
</comment>
<comment type="subcellular location">
    <subcellularLocation>
        <location evidence="1">Virion</location>
    </subcellularLocation>
    <subcellularLocation>
        <location evidence="1">Host nucleus</location>
    </subcellularLocation>
    <subcellularLocation>
        <location evidence="1">Host mitochondrion</location>
    </subcellularLocation>
</comment>
<comment type="similarity">
    <text evidence="1">Belongs to the influenza viruses PB2 family.</text>
</comment>
<evidence type="ECO:0000255" key="1">
    <source>
        <dbReference type="HAMAP-Rule" id="MF_04062"/>
    </source>
</evidence>
<gene>
    <name evidence="1" type="primary">PB2</name>
</gene>
<accession>P11486</accession>
<accession>A4GCI5</accession>
<feature type="chain" id="PRO_0000078815" description="Polymerase basic protein 2">
    <location>
        <begin position="1"/>
        <end position="759"/>
    </location>
</feature>
<feature type="short sequence motif" description="Nuclear localization signal" evidence="1">
    <location>
        <begin position="736"/>
        <end position="739"/>
    </location>
</feature>
<feature type="site" description="Mammalian adaptation" evidence="1">
    <location>
        <position position="627"/>
    </location>
</feature>
<feature type="sequence variant">
    <original>N</original>
    <variation>S</variation>
    <location>
        <position position="519"/>
    </location>
</feature>
<reference key="1">
    <citation type="journal article" date="1988" name="Arch. Virol.">
        <title>Evolution of influenza polymerase: nucleotide sequence of the PB2 gene of A/Chile/1/83 (H1 N1).</title>
        <authorList>
            <person name="Schreier E."/>
            <person name="Petzold D.R."/>
            <person name="Michel S."/>
            <person name="Dittmann S."/>
        </authorList>
    </citation>
    <scope>NUCLEOTIDE SEQUENCE [GENOMIC RNA]</scope>
</reference>
<reference key="2">
    <citation type="submission" date="2007-03" db="EMBL/GenBank/DDBJ databases">
        <title>The NIAID influenza genome sequencing project.</title>
        <authorList>
            <person name="Ghedin E."/>
            <person name="Spiro D."/>
            <person name="Miller N."/>
            <person name="Zaborsky J."/>
            <person name="Feldblyum T."/>
            <person name="Subbu V."/>
            <person name="Shumway M."/>
            <person name="Sparenborg J."/>
            <person name="Groveman L."/>
            <person name="Halpin R."/>
            <person name="Sitz J."/>
            <person name="Koo H."/>
            <person name="Salzberg S.L."/>
            <person name="Webster R.G."/>
            <person name="Hoffmann E."/>
            <person name="Krauss S."/>
            <person name="Naeve C."/>
            <person name="Bao Y."/>
            <person name="Bolotov P."/>
            <person name="Dernovoy D."/>
            <person name="Kiryutin B."/>
            <person name="Lipman D.J."/>
            <person name="Tatusova T."/>
        </authorList>
    </citation>
    <scope>NUCLEOTIDE SEQUENCE [GENOMIC RNA]</scope>
</reference>
<reference key="3">
    <citation type="submission" date="2007-03" db="EMBL/GenBank/DDBJ databases">
        <authorList>
            <consortium name="The NIAID Influenza Genome Sequencing Consortium"/>
        </authorList>
    </citation>
    <scope>NUCLEOTIDE SEQUENCE [GENOMIC RNA]</scope>
</reference>
<protein>
    <recommendedName>
        <fullName evidence="1">Polymerase basic protein 2</fullName>
    </recommendedName>
    <alternativeName>
        <fullName evidence="1">RNA-directed RNA polymerase subunit P3</fullName>
    </alternativeName>
</protein>
<proteinExistence type="inferred from homology"/>
<keyword id="KW-1157">Cap snatching</keyword>
<keyword id="KW-1262">Eukaryotic host gene expression shutoff by virus</keyword>
<keyword id="KW-1191">Eukaryotic host transcription shutoff by virus</keyword>
<keyword id="KW-1190">Host gene expression shutoff by virus</keyword>
<keyword id="KW-1045">Host mitochondrion</keyword>
<keyword id="KW-1048">Host nucleus</keyword>
<keyword id="KW-0945">Host-virus interaction</keyword>
<keyword id="KW-1090">Inhibition of host innate immune response by virus</keyword>
<keyword id="KW-1097">Inhibition of host MAVS by virus</keyword>
<keyword id="KW-1113">Inhibition of host RLR pathway by virus</keyword>
<keyword id="KW-1104">Inhibition of host RNA polymerase II by virus</keyword>
<keyword id="KW-0506">mRNA capping</keyword>
<keyword id="KW-0507">mRNA processing</keyword>
<keyword id="KW-0899">Viral immunoevasion</keyword>
<keyword id="KW-1195">Viral transcription</keyword>
<keyword id="KW-0946">Virion</keyword>
<dbReference type="EMBL" id="X15283">
    <property type="protein sequence ID" value="CAA33357.1"/>
    <property type="molecule type" value="Genomic_RNA"/>
</dbReference>
<dbReference type="EMBL" id="CY020444">
    <property type="protein sequence ID" value="ABO38350.1"/>
    <property type="molecule type" value="Viral_cRNA"/>
</dbReference>
<dbReference type="SMR" id="P11486"/>
<dbReference type="PRO" id="PR:P11486"/>
<dbReference type="Proteomes" id="UP000008582">
    <property type="component" value="Genome"/>
</dbReference>
<dbReference type="GO" id="GO:0033650">
    <property type="term" value="C:host cell mitochondrion"/>
    <property type="evidence" value="ECO:0007669"/>
    <property type="project" value="UniProtKB-SubCell"/>
</dbReference>
<dbReference type="GO" id="GO:0042025">
    <property type="term" value="C:host cell nucleus"/>
    <property type="evidence" value="ECO:0007669"/>
    <property type="project" value="UniProtKB-SubCell"/>
</dbReference>
<dbReference type="GO" id="GO:0044423">
    <property type="term" value="C:virion component"/>
    <property type="evidence" value="ECO:0007669"/>
    <property type="project" value="UniProtKB-UniRule"/>
</dbReference>
<dbReference type="GO" id="GO:0003723">
    <property type="term" value="F:RNA binding"/>
    <property type="evidence" value="ECO:0007669"/>
    <property type="project" value="UniProtKB-UniRule"/>
</dbReference>
<dbReference type="GO" id="GO:0003968">
    <property type="term" value="F:RNA-directed RNA polymerase activity"/>
    <property type="evidence" value="ECO:0007669"/>
    <property type="project" value="UniProtKB-UniRule"/>
</dbReference>
<dbReference type="GO" id="GO:0006370">
    <property type="term" value="P:7-methylguanosine mRNA capping"/>
    <property type="evidence" value="ECO:0007669"/>
    <property type="project" value="UniProtKB-UniRule"/>
</dbReference>
<dbReference type="GO" id="GO:0075526">
    <property type="term" value="P:cap snatching"/>
    <property type="evidence" value="ECO:0007669"/>
    <property type="project" value="UniProtKB-UniRule"/>
</dbReference>
<dbReference type="GO" id="GO:0006351">
    <property type="term" value="P:DNA-templated transcription"/>
    <property type="evidence" value="ECO:0007669"/>
    <property type="project" value="UniProtKB-UniRule"/>
</dbReference>
<dbReference type="GO" id="GO:0039545">
    <property type="term" value="P:symbiont-mediated suppression of host cytoplasmic pattern recognition receptor signaling pathway via inhibition of MAVS activity"/>
    <property type="evidence" value="ECO:0007669"/>
    <property type="project" value="UniProtKB-UniRule"/>
</dbReference>
<dbReference type="GO" id="GO:0039657">
    <property type="term" value="P:symbiont-mediated suppression of host gene expression"/>
    <property type="evidence" value="ECO:0007669"/>
    <property type="project" value="UniProtKB-KW"/>
</dbReference>
<dbReference type="GO" id="GO:0039523">
    <property type="term" value="P:symbiont-mediated suppression of host mRNA transcription via inhibition of RNA polymerase II activity"/>
    <property type="evidence" value="ECO:0007669"/>
    <property type="project" value="UniProtKB-UniRule"/>
</dbReference>
<dbReference type="GO" id="GO:0039694">
    <property type="term" value="P:viral RNA genome replication"/>
    <property type="evidence" value="ECO:0007669"/>
    <property type="project" value="InterPro"/>
</dbReference>
<dbReference type="FunFam" id="3.30.30.90:FF:000001">
    <property type="entry name" value="Polymerase basic protein 2"/>
    <property type="match status" value="1"/>
</dbReference>
<dbReference type="Gene3D" id="3.30.30.90">
    <property type="entry name" value="Polymerase Basic Protein 2, C-terminal domain"/>
    <property type="match status" value="1"/>
</dbReference>
<dbReference type="HAMAP" id="MF_04062">
    <property type="entry name" value="INV_PB2"/>
    <property type="match status" value="1"/>
</dbReference>
<dbReference type="InterPro" id="IPR049110">
    <property type="entry name" value="Flu_PB2_2nd"/>
</dbReference>
<dbReference type="InterPro" id="IPR049114">
    <property type="entry name" value="Flu_PB2_6th"/>
</dbReference>
<dbReference type="InterPro" id="IPR049115">
    <property type="entry name" value="Flu_PB2_C"/>
</dbReference>
<dbReference type="InterPro" id="IPR048298">
    <property type="entry name" value="Flu_PB2_CAP-bd"/>
</dbReference>
<dbReference type="InterPro" id="IPR049111">
    <property type="entry name" value="Flu_PB2_middle"/>
</dbReference>
<dbReference type="InterPro" id="IPR049106">
    <property type="entry name" value="Flu_PB2_N"/>
</dbReference>
<dbReference type="InterPro" id="IPR001591">
    <property type="entry name" value="INV_PB2"/>
</dbReference>
<dbReference type="InterPro" id="IPR049113">
    <property type="entry name" value="PB2_helical"/>
</dbReference>
<dbReference type="InterPro" id="IPR037258">
    <property type="entry name" value="PDB2_C"/>
</dbReference>
<dbReference type="Pfam" id="PF20947">
    <property type="entry name" value="Flu_PB2_1st"/>
    <property type="match status" value="1"/>
</dbReference>
<dbReference type="Pfam" id="PF20948">
    <property type="entry name" value="Flu_PB2_2nd"/>
    <property type="match status" value="1"/>
</dbReference>
<dbReference type="Pfam" id="PF20949">
    <property type="entry name" value="Flu_PB2_3rd"/>
    <property type="match status" value="1"/>
</dbReference>
<dbReference type="Pfam" id="PF20950">
    <property type="entry name" value="Flu_PB2_4th"/>
    <property type="match status" value="1"/>
</dbReference>
<dbReference type="Pfam" id="PF00604">
    <property type="entry name" value="Flu_PB2_5th"/>
    <property type="match status" value="1"/>
</dbReference>
<dbReference type="Pfam" id="PF20951">
    <property type="entry name" value="Flu_PB2_6th"/>
    <property type="match status" value="1"/>
</dbReference>
<dbReference type="Pfam" id="PF20952">
    <property type="entry name" value="Flu_PB2_7th"/>
    <property type="match status" value="1"/>
</dbReference>
<dbReference type="SUPFAM" id="SSF160453">
    <property type="entry name" value="PB2 C-terminal domain-like"/>
    <property type="match status" value="1"/>
</dbReference>
<organism>
    <name type="scientific">Influenza A virus (strain A/Chile/1/1983 H1N1)</name>
    <dbReference type="NCBI Taxonomy" id="380985"/>
    <lineage>
        <taxon>Viruses</taxon>
        <taxon>Riboviria</taxon>
        <taxon>Orthornavirae</taxon>
        <taxon>Negarnaviricota</taxon>
        <taxon>Polyploviricotina</taxon>
        <taxon>Insthoviricetes</taxon>
        <taxon>Articulavirales</taxon>
        <taxon>Orthomyxoviridae</taxon>
        <taxon>Alphainfluenzavirus</taxon>
        <taxon>Alphainfluenzavirus influenzae</taxon>
        <taxon>Influenza A virus</taxon>
    </lineage>
</organism>
<organismHost>
    <name type="scientific">Aves</name>
    <dbReference type="NCBI Taxonomy" id="8782"/>
</organismHost>
<organismHost>
    <name type="scientific">Homo sapiens</name>
    <name type="common">Human</name>
    <dbReference type="NCBI Taxonomy" id="9606"/>
</organismHost>
<organismHost>
    <name type="scientific">Sus scrofa</name>
    <name type="common">Pig</name>
    <dbReference type="NCBI Taxonomy" id="9823"/>
</organismHost>